<name>ERA_COXBU</name>
<sequence length="295" mass="33873">MKPTYCGYAAIIGRPNVGKSTLLNQLLEQKISITSRKPQTTRYQILGVKTFKDIQVIYVDTPGLHAGTERTINRYMNRTARGALRDVDAIVFVIEPHWESQDAWVLDNLKEIETPVFLVINKVDKIKNRAELLPLIEKVSSLYAFQKITPLSAKTGDQVGTLEQAVHQLMPESPFYFPPEQVTDRSDQFMASEIIREKLMRLLGQEIPYSLAVTLIEFRKEEKIIRISAVIWVEKKSQKGIVIGKGGERLKRVGTNARLDMEKWFGKRVFLQLWVKVKSGWADNERLLRELGFEE</sequence>
<protein>
    <recommendedName>
        <fullName evidence="1">GTPase Era</fullName>
    </recommendedName>
</protein>
<feature type="chain" id="PRO_0000180010" description="GTPase Era">
    <location>
        <begin position="1"/>
        <end position="295"/>
    </location>
</feature>
<feature type="domain" description="Era-type G" evidence="2">
    <location>
        <begin position="5"/>
        <end position="172"/>
    </location>
</feature>
<feature type="domain" description="KH type-2" evidence="1">
    <location>
        <begin position="203"/>
        <end position="279"/>
    </location>
</feature>
<feature type="region of interest" description="G1" evidence="2">
    <location>
        <begin position="13"/>
        <end position="20"/>
    </location>
</feature>
<feature type="region of interest" description="G2" evidence="2">
    <location>
        <begin position="39"/>
        <end position="43"/>
    </location>
</feature>
<feature type="region of interest" description="G3" evidence="2">
    <location>
        <begin position="60"/>
        <end position="63"/>
    </location>
</feature>
<feature type="region of interest" description="G4" evidence="2">
    <location>
        <begin position="121"/>
        <end position="124"/>
    </location>
</feature>
<feature type="region of interest" description="G5" evidence="2">
    <location>
        <begin position="151"/>
        <end position="153"/>
    </location>
</feature>
<feature type="binding site" evidence="1">
    <location>
        <begin position="13"/>
        <end position="20"/>
    </location>
    <ligand>
        <name>GTP</name>
        <dbReference type="ChEBI" id="CHEBI:37565"/>
    </ligand>
</feature>
<feature type="binding site" evidence="1">
    <location>
        <begin position="60"/>
        <end position="64"/>
    </location>
    <ligand>
        <name>GTP</name>
        <dbReference type="ChEBI" id="CHEBI:37565"/>
    </ligand>
</feature>
<feature type="binding site" evidence="1">
    <location>
        <begin position="121"/>
        <end position="124"/>
    </location>
    <ligand>
        <name>GTP</name>
        <dbReference type="ChEBI" id="CHEBI:37565"/>
    </ligand>
</feature>
<reference key="1">
    <citation type="journal article" date="1994" name="Mol. Microbiol.">
        <title>Analysis of the rnc locus of Coxiella burnetii.</title>
        <authorList>
            <person name="Zuber M."/>
            <person name="Hoover T.A."/>
            <person name="Powell B.S."/>
            <person name="Court D.L."/>
        </authorList>
    </citation>
    <scope>NUCLEOTIDE SEQUENCE [GENOMIC DNA]</scope>
    <source>
        <strain>CB9MIC7</strain>
    </source>
</reference>
<reference key="2">
    <citation type="journal article" date="2003" name="Proc. Natl. Acad. Sci. U.S.A.">
        <title>Complete genome sequence of the Q-fever pathogen, Coxiella burnetii.</title>
        <authorList>
            <person name="Seshadri R."/>
            <person name="Paulsen I.T."/>
            <person name="Eisen J.A."/>
            <person name="Read T.D."/>
            <person name="Nelson K.E."/>
            <person name="Nelson W.C."/>
            <person name="Ward N.L."/>
            <person name="Tettelin H."/>
            <person name="Davidsen T.M."/>
            <person name="Beanan M.J."/>
            <person name="DeBoy R.T."/>
            <person name="Daugherty S.C."/>
            <person name="Brinkac L.M."/>
            <person name="Madupu R."/>
            <person name="Dodson R.J."/>
            <person name="Khouri H.M."/>
            <person name="Lee K.H."/>
            <person name="Carty H.A."/>
            <person name="Scanlan D."/>
            <person name="Heinzen R.A."/>
            <person name="Thompson H.A."/>
            <person name="Samuel J.E."/>
            <person name="Fraser C.M."/>
            <person name="Heidelberg J.F."/>
        </authorList>
    </citation>
    <scope>NUCLEOTIDE SEQUENCE [LARGE SCALE GENOMIC DNA]</scope>
    <source>
        <strain>RSA 493 / Nine Mile phase I</strain>
    </source>
</reference>
<reference key="3">
    <citation type="journal article" date="2007" name="Infect. Immun.">
        <title>Proteome and antigen profiling of Coxiella burnetii developmental forms.</title>
        <authorList>
            <person name="Coleman S.A."/>
            <person name="Fischer E.R."/>
            <person name="Cockrell D.C."/>
            <person name="Voth D.E."/>
            <person name="Howe D."/>
            <person name="Mead D.J."/>
            <person name="Samuel J.E."/>
            <person name="Heinzen R.A."/>
        </authorList>
    </citation>
    <scope>IDENTIFICATION BY MASS SPECTROMETRY</scope>
    <scope>DEVELOPMENTAL STAGE</scope>
    <source>
        <strain>Nine Mile Crazy / RSA 514</strain>
    </source>
</reference>
<organism>
    <name type="scientific">Coxiella burnetii (strain RSA 493 / Nine Mile phase I)</name>
    <dbReference type="NCBI Taxonomy" id="227377"/>
    <lineage>
        <taxon>Bacteria</taxon>
        <taxon>Pseudomonadati</taxon>
        <taxon>Pseudomonadota</taxon>
        <taxon>Gammaproteobacteria</taxon>
        <taxon>Legionellales</taxon>
        <taxon>Coxiellaceae</taxon>
        <taxon>Coxiella</taxon>
    </lineage>
</organism>
<proteinExistence type="evidence at protein level"/>
<comment type="function">
    <text evidence="1">An essential GTPase that binds both GDP and GTP, with rapid nucleotide exchange. Plays a role in 16S rRNA processing and 30S ribosomal subunit biogenesis and possibly also in cell cycle regulation and energy metabolism.</text>
</comment>
<comment type="subunit">
    <text evidence="1">Monomer.</text>
</comment>
<comment type="subcellular location">
    <subcellularLocation>
        <location>Cytoplasm</location>
    </subcellularLocation>
    <subcellularLocation>
        <location evidence="1">Cell inner membrane</location>
        <topology evidence="1">Peripheral membrane protein</topology>
    </subcellularLocation>
</comment>
<comment type="developmental stage">
    <text evidence="3">More than twofold more abundant in the small cell variant (SCV) stage than in the large cell variant (LCV) stage (at protein level). LCVs are more metabolically active than SCVs.</text>
</comment>
<comment type="similarity">
    <text evidence="1 2">Belongs to the TRAFAC class TrmE-Era-EngA-EngB-Septin-like GTPase superfamily. Era GTPase family.</text>
</comment>
<keyword id="KW-0997">Cell inner membrane</keyword>
<keyword id="KW-1003">Cell membrane</keyword>
<keyword id="KW-0963">Cytoplasm</keyword>
<keyword id="KW-0342">GTP-binding</keyword>
<keyword id="KW-0472">Membrane</keyword>
<keyword id="KW-0547">Nucleotide-binding</keyword>
<keyword id="KW-1185">Reference proteome</keyword>
<keyword id="KW-0690">Ribosome biogenesis</keyword>
<keyword id="KW-0694">RNA-binding</keyword>
<keyword id="KW-0699">rRNA-binding</keyword>
<gene>
    <name evidence="1" type="primary">era</name>
    <name type="ordered locus">CBU_1502</name>
</gene>
<dbReference type="EMBL" id="L27436">
    <property type="protein sequence ID" value="AAA69691.1"/>
    <property type="molecule type" value="Genomic_DNA"/>
</dbReference>
<dbReference type="EMBL" id="AE016828">
    <property type="protein sequence ID" value="AAO90999.1"/>
    <property type="molecule type" value="Genomic_DNA"/>
</dbReference>
<dbReference type="PIR" id="S60768">
    <property type="entry name" value="S60768"/>
</dbReference>
<dbReference type="RefSeq" id="NP_820485.1">
    <property type="nucleotide sequence ID" value="NC_002971.4"/>
</dbReference>
<dbReference type="RefSeq" id="WP_010958267.1">
    <property type="nucleotide sequence ID" value="NC_002971.4"/>
</dbReference>
<dbReference type="SMR" id="P51836"/>
<dbReference type="STRING" id="227377.CBU_1502"/>
<dbReference type="EnsemblBacteria" id="AAO90999">
    <property type="protein sequence ID" value="AAO90999"/>
    <property type="gene ID" value="CBU_1502"/>
</dbReference>
<dbReference type="GeneID" id="1209412"/>
<dbReference type="KEGG" id="cbu:CBU_1502"/>
<dbReference type="PATRIC" id="fig|227377.7.peg.1504"/>
<dbReference type="eggNOG" id="COG1159">
    <property type="taxonomic scope" value="Bacteria"/>
</dbReference>
<dbReference type="HOGENOM" id="CLU_038009_1_2_6"/>
<dbReference type="OrthoDB" id="9805918at2"/>
<dbReference type="Proteomes" id="UP000002671">
    <property type="component" value="Chromosome"/>
</dbReference>
<dbReference type="GO" id="GO:0005829">
    <property type="term" value="C:cytosol"/>
    <property type="evidence" value="ECO:0000318"/>
    <property type="project" value="GO_Central"/>
</dbReference>
<dbReference type="GO" id="GO:0005886">
    <property type="term" value="C:plasma membrane"/>
    <property type="evidence" value="ECO:0007669"/>
    <property type="project" value="UniProtKB-SubCell"/>
</dbReference>
<dbReference type="GO" id="GO:0005525">
    <property type="term" value="F:GTP binding"/>
    <property type="evidence" value="ECO:0007669"/>
    <property type="project" value="UniProtKB-UniRule"/>
</dbReference>
<dbReference type="GO" id="GO:0003924">
    <property type="term" value="F:GTPase activity"/>
    <property type="evidence" value="ECO:0007669"/>
    <property type="project" value="UniProtKB-UniRule"/>
</dbReference>
<dbReference type="GO" id="GO:0043024">
    <property type="term" value="F:ribosomal small subunit binding"/>
    <property type="evidence" value="ECO:0000318"/>
    <property type="project" value="GO_Central"/>
</dbReference>
<dbReference type="GO" id="GO:0019843">
    <property type="term" value="F:rRNA binding"/>
    <property type="evidence" value="ECO:0000318"/>
    <property type="project" value="GO_Central"/>
</dbReference>
<dbReference type="GO" id="GO:0070181">
    <property type="term" value="F:small ribosomal subunit rRNA binding"/>
    <property type="evidence" value="ECO:0007669"/>
    <property type="project" value="UniProtKB-UniRule"/>
</dbReference>
<dbReference type="GO" id="GO:0000028">
    <property type="term" value="P:ribosomal small subunit assembly"/>
    <property type="evidence" value="ECO:0000318"/>
    <property type="project" value="GO_Central"/>
</dbReference>
<dbReference type="CDD" id="cd04163">
    <property type="entry name" value="Era"/>
    <property type="match status" value="1"/>
</dbReference>
<dbReference type="CDD" id="cd22534">
    <property type="entry name" value="KH-II_Era"/>
    <property type="match status" value="1"/>
</dbReference>
<dbReference type="FunFam" id="3.30.300.20:FF:000003">
    <property type="entry name" value="GTPase Era"/>
    <property type="match status" value="1"/>
</dbReference>
<dbReference type="FunFam" id="3.40.50.300:FF:000094">
    <property type="entry name" value="GTPase Era"/>
    <property type="match status" value="1"/>
</dbReference>
<dbReference type="Gene3D" id="3.30.300.20">
    <property type="match status" value="1"/>
</dbReference>
<dbReference type="Gene3D" id="3.40.50.300">
    <property type="entry name" value="P-loop containing nucleotide triphosphate hydrolases"/>
    <property type="match status" value="1"/>
</dbReference>
<dbReference type="HAMAP" id="MF_00367">
    <property type="entry name" value="GTPase_Era"/>
    <property type="match status" value="1"/>
</dbReference>
<dbReference type="InterPro" id="IPR030388">
    <property type="entry name" value="G_ERA_dom"/>
</dbReference>
<dbReference type="InterPro" id="IPR006073">
    <property type="entry name" value="GTP-bd"/>
</dbReference>
<dbReference type="InterPro" id="IPR005662">
    <property type="entry name" value="GTPase_Era-like"/>
</dbReference>
<dbReference type="InterPro" id="IPR015946">
    <property type="entry name" value="KH_dom-like_a/b"/>
</dbReference>
<dbReference type="InterPro" id="IPR004044">
    <property type="entry name" value="KH_dom_type_2"/>
</dbReference>
<dbReference type="InterPro" id="IPR009019">
    <property type="entry name" value="KH_sf_prok-type"/>
</dbReference>
<dbReference type="InterPro" id="IPR027417">
    <property type="entry name" value="P-loop_NTPase"/>
</dbReference>
<dbReference type="InterPro" id="IPR005225">
    <property type="entry name" value="Small_GTP-bd"/>
</dbReference>
<dbReference type="NCBIfam" id="TIGR00436">
    <property type="entry name" value="era"/>
    <property type="match status" value="1"/>
</dbReference>
<dbReference type="NCBIfam" id="NF000908">
    <property type="entry name" value="PRK00089.1"/>
    <property type="match status" value="1"/>
</dbReference>
<dbReference type="NCBIfam" id="TIGR00231">
    <property type="entry name" value="small_GTP"/>
    <property type="match status" value="1"/>
</dbReference>
<dbReference type="PANTHER" id="PTHR42698">
    <property type="entry name" value="GTPASE ERA"/>
    <property type="match status" value="1"/>
</dbReference>
<dbReference type="PANTHER" id="PTHR42698:SF1">
    <property type="entry name" value="GTPASE ERA, MITOCHONDRIAL"/>
    <property type="match status" value="1"/>
</dbReference>
<dbReference type="Pfam" id="PF07650">
    <property type="entry name" value="KH_2"/>
    <property type="match status" value="1"/>
</dbReference>
<dbReference type="Pfam" id="PF01926">
    <property type="entry name" value="MMR_HSR1"/>
    <property type="match status" value="1"/>
</dbReference>
<dbReference type="PRINTS" id="PR00326">
    <property type="entry name" value="GTP1OBG"/>
</dbReference>
<dbReference type="SUPFAM" id="SSF52540">
    <property type="entry name" value="P-loop containing nucleoside triphosphate hydrolases"/>
    <property type="match status" value="1"/>
</dbReference>
<dbReference type="SUPFAM" id="SSF54814">
    <property type="entry name" value="Prokaryotic type KH domain (KH-domain type II)"/>
    <property type="match status" value="1"/>
</dbReference>
<dbReference type="PROSITE" id="PS51713">
    <property type="entry name" value="G_ERA"/>
    <property type="match status" value="1"/>
</dbReference>
<dbReference type="PROSITE" id="PS50823">
    <property type="entry name" value="KH_TYPE_2"/>
    <property type="match status" value="1"/>
</dbReference>
<evidence type="ECO:0000255" key="1">
    <source>
        <dbReference type="HAMAP-Rule" id="MF_00367"/>
    </source>
</evidence>
<evidence type="ECO:0000255" key="2">
    <source>
        <dbReference type="PROSITE-ProRule" id="PRU01050"/>
    </source>
</evidence>
<evidence type="ECO:0000269" key="3">
    <source>
    </source>
</evidence>
<accession>P51836</accession>